<organism>
    <name type="scientific">Giardia intestinalis</name>
    <name type="common">Giardia lamblia</name>
    <dbReference type="NCBI Taxonomy" id="5741"/>
    <lineage>
        <taxon>Eukaryota</taxon>
        <taxon>Metamonada</taxon>
        <taxon>Diplomonadida</taxon>
        <taxon>Hexamitidae</taxon>
        <taxon>Giardiinae</taxon>
        <taxon>Giardia</taxon>
    </lineage>
</organism>
<reference key="1">
    <citation type="journal article" date="1988" name="Nucleic Acids Res.">
        <title>Cloning and sequence of beta tubulin cDNA from Giardia lamblia.</title>
        <authorList>
            <person name="Kirk-Mason K.E."/>
            <person name="Turner M.J."/>
            <person name="Chakraborty P.R."/>
        </authorList>
    </citation>
    <scope>NUCLEOTIDE SEQUENCE [MRNA]</scope>
</reference>
<comment type="function">
    <text>Tubulin is the major constituent of microtubules, a cylinder consisting of laterally associated linear protofilaments composed of alpha- and beta-tubulin heterodimers. Microtubules grow by the addition of GTP-tubulin dimers to the microtubule end, where a stabilizing cap forms. Below the cap, tubulin dimers are in GDP-bound state, owing to GTPase activity of alpha-tubulin.</text>
</comment>
<comment type="cofactor">
    <cofactor evidence="1">
        <name>Mg(2+)</name>
        <dbReference type="ChEBI" id="CHEBI:18420"/>
    </cofactor>
</comment>
<comment type="subunit">
    <text>Dimer of alpha and beta chains. A typical microtubule is a hollow water-filled tube with an outer diameter of 25 nm and an inner diameter of 15 nM. Alpha-beta heterodimers associate head-to-tail to form protofilaments running lengthwise along the microtubule wall with the beta-tubulin subunit facing the microtubule plus end conferring a structural polarity. Microtubules usually have 13 protofilaments but different protofilament numbers can be found in some organisms and specialized cells.</text>
</comment>
<comment type="subcellular location">
    <subcellularLocation>
        <location>Cytoplasm</location>
        <location>Cytoskeleton</location>
    </subcellularLocation>
</comment>
<comment type="similarity">
    <text evidence="4">Belongs to the tubulin family.</text>
</comment>
<keyword id="KW-0963">Cytoplasm</keyword>
<keyword id="KW-0206">Cytoskeleton</keyword>
<keyword id="KW-0342">GTP-binding</keyword>
<keyword id="KW-0460">Magnesium</keyword>
<keyword id="KW-0479">Metal-binding</keyword>
<keyword id="KW-0493">Microtubule</keyword>
<keyword id="KW-0547">Nucleotide-binding</keyword>
<sequence length="446" mass="49956">MREIVHIQAGQCGNQIGAKFWEVISDEHGVDPSGEYRGDSELQIERINVYFNEAAGGRYVPRAILVDLEPGTMDSVRAGPFGQIFRPDNFVFGQSGAGNNWAKGHYTEGAELVDAVLDVVRKRSEACDCLQGFQICHSLGGGTGAGMGTLLIAKIREEYPDRMMCTFSVVPSPKVSDTVVEPYNATLSVHQLVEHADEVFCIDNEALYDICFRTLKLTCPTYGDLNHLVSLVMSGCTSCLRFPGQLNADLRKLAVNLIPFPRLHFFLVGFAPLTSRGSQIYRALTVPELVSQMFDNKNMMAASDPRHGRYLTAAAMFRGRMSTKEVDEQMLNIQNKNSSYFVEWIPNNMKVSVCDIPPRGLKMAATFIGNSTCIQELFKRVGEQFSAMFRRKAFLHWYTGEGMDEMEFTEAESNMNDLVSEYQQYQEAGVDEGEEFEEEEDFGDEQ</sequence>
<feature type="chain" id="PRO_0000048297" description="Tubulin beta chain">
    <location>
        <begin position="1"/>
        <end position="446"/>
    </location>
</feature>
<feature type="region of interest" description="Disordered" evidence="3">
    <location>
        <begin position="427"/>
        <end position="446"/>
    </location>
</feature>
<feature type="compositionally biased region" description="Acidic residues" evidence="3">
    <location>
        <begin position="429"/>
        <end position="446"/>
    </location>
</feature>
<feature type="binding site" evidence="2">
    <location>
        <position position="11"/>
    </location>
    <ligand>
        <name>GTP</name>
        <dbReference type="ChEBI" id="CHEBI:37565"/>
    </ligand>
</feature>
<feature type="binding site" evidence="1">
    <location>
        <position position="69"/>
    </location>
    <ligand>
        <name>GTP</name>
        <dbReference type="ChEBI" id="CHEBI:37565"/>
    </ligand>
</feature>
<feature type="binding site" evidence="1">
    <location>
        <position position="69"/>
    </location>
    <ligand>
        <name>Mg(2+)</name>
        <dbReference type="ChEBI" id="CHEBI:18420"/>
    </ligand>
</feature>
<feature type="binding site" evidence="2">
    <location>
        <position position="138"/>
    </location>
    <ligand>
        <name>GTP</name>
        <dbReference type="ChEBI" id="CHEBI:37565"/>
    </ligand>
</feature>
<feature type="binding site" evidence="2">
    <location>
        <position position="142"/>
    </location>
    <ligand>
        <name>GTP</name>
        <dbReference type="ChEBI" id="CHEBI:37565"/>
    </ligand>
</feature>
<feature type="binding site" evidence="2">
    <location>
        <position position="143"/>
    </location>
    <ligand>
        <name>GTP</name>
        <dbReference type="ChEBI" id="CHEBI:37565"/>
    </ligand>
</feature>
<feature type="binding site" evidence="2">
    <location>
        <position position="144"/>
    </location>
    <ligand>
        <name>GTP</name>
        <dbReference type="ChEBI" id="CHEBI:37565"/>
    </ligand>
</feature>
<feature type="binding site" evidence="2">
    <location>
        <position position="204"/>
    </location>
    <ligand>
        <name>GTP</name>
        <dbReference type="ChEBI" id="CHEBI:37565"/>
    </ligand>
</feature>
<feature type="binding site" evidence="2">
    <location>
        <position position="226"/>
    </location>
    <ligand>
        <name>GTP</name>
        <dbReference type="ChEBI" id="CHEBI:37565"/>
    </ligand>
</feature>
<proteinExistence type="evidence at transcript level"/>
<protein>
    <recommendedName>
        <fullName>Tubulin beta chain</fullName>
    </recommendedName>
    <alternativeName>
        <fullName>Beta-tubulin</fullName>
    </alternativeName>
</protein>
<evidence type="ECO:0000250" key="1">
    <source>
        <dbReference type="UniProtKB" id="P68363"/>
    </source>
</evidence>
<evidence type="ECO:0000250" key="2">
    <source>
        <dbReference type="UniProtKB" id="Q13509"/>
    </source>
</evidence>
<evidence type="ECO:0000256" key="3">
    <source>
        <dbReference type="SAM" id="MobiDB-lite"/>
    </source>
</evidence>
<evidence type="ECO:0000305" key="4"/>
<accession>P05304</accession>
<name>TBB_GIAIN</name>
<dbReference type="EMBL" id="X06748">
    <property type="protein sequence ID" value="CAA29923.1"/>
    <property type="molecule type" value="mRNA"/>
</dbReference>
<dbReference type="PIR" id="S00743">
    <property type="entry name" value="S00743"/>
</dbReference>
<dbReference type="SMR" id="P05304"/>
<dbReference type="ChEMBL" id="CHEMBL5058521"/>
<dbReference type="VEuPathDB" id="GiardiaDB:DHA2_153187"/>
<dbReference type="VEuPathDB" id="GiardiaDB:GL50581_1380"/>
<dbReference type="VEuPathDB" id="GiardiaDB:GL50803_00136021"/>
<dbReference type="VEuPathDB" id="GiardiaDB:QR46_4886"/>
<dbReference type="eggNOG" id="KOG1375">
    <property type="taxonomic scope" value="Eukaryota"/>
</dbReference>
<dbReference type="GO" id="GO:0005737">
    <property type="term" value="C:cytoplasm"/>
    <property type="evidence" value="ECO:0007669"/>
    <property type="project" value="UniProtKB-KW"/>
</dbReference>
<dbReference type="GO" id="GO:0005874">
    <property type="term" value="C:microtubule"/>
    <property type="evidence" value="ECO:0007669"/>
    <property type="project" value="UniProtKB-KW"/>
</dbReference>
<dbReference type="GO" id="GO:0005525">
    <property type="term" value="F:GTP binding"/>
    <property type="evidence" value="ECO:0007669"/>
    <property type="project" value="UniProtKB-KW"/>
</dbReference>
<dbReference type="GO" id="GO:0003924">
    <property type="term" value="F:GTPase activity"/>
    <property type="evidence" value="ECO:0007669"/>
    <property type="project" value="InterPro"/>
</dbReference>
<dbReference type="GO" id="GO:0046872">
    <property type="term" value="F:metal ion binding"/>
    <property type="evidence" value="ECO:0007669"/>
    <property type="project" value="UniProtKB-KW"/>
</dbReference>
<dbReference type="GO" id="GO:0005200">
    <property type="term" value="F:structural constituent of cytoskeleton"/>
    <property type="evidence" value="ECO:0007669"/>
    <property type="project" value="InterPro"/>
</dbReference>
<dbReference type="GO" id="GO:0007017">
    <property type="term" value="P:microtubule-based process"/>
    <property type="evidence" value="ECO:0007669"/>
    <property type="project" value="InterPro"/>
</dbReference>
<dbReference type="CDD" id="cd02187">
    <property type="entry name" value="beta_tubulin"/>
    <property type="match status" value="1"/>
</dbReference>
<dbReference type="FunFam" id="1.10.287.600:FF:000006">
    <property type="entry name" value="Tubulin beta chain"/>
    <property type="match status" value="1"/>
</dbReference>
<dbReference type="FunFam" id="3.30.1330.20:FF:000002">
    <property type="entry name" value="Tubulin beta chain"/>
    <property type="match status" value="1"/>
</dbReference>
<dbReference type="FunFam" id="3.40.50.1440:FF:000003">
    <property type="entry name" value="Tubulin beta chain"/>
    <property type="match status" value="1"/>
</dbReference>
<dbReference type="Gene3D" id="1.10.287.600">
    <property type="entry name" value="Helix hairpin bin"/>
    <property type="match status" value="1"/>
</dbReference>
<dbReference type="Gene3D" id="3.30.1330.20">
    <property type="entry name" value="Tubulin/FtsZ, C-terminal domain"/>
    <property type="match status" value="1"/>
</dbReference>
<dbReference type="Gene3D" id="3.40.50.1440">
    <property type="entry name" value="Tubulin/FtsZ, GTPase domain"/>
    <property type="match status" value="1"/>
</dbReference>
<dbReference type="InterPro" id="IPR013838">
    <property type="entry name" value="Beta-tubulin_BS"/>
</dbReference>
<dbReference type="InterPro" id="IPR002453">
    <property type="entry name" value="Beta_tubulin"/>
</dbReference>
<dbReference type="InterPro" id="IPR008280">
    <property type="entry name" value="Tub_FtsZ_C"/>
</dbReference>
<dbReference type="InterPro" id="IPR000217">
    <property type="entry name" value="Tubulin"/>
</dbReference>
<dbReference type="InterPro" id="IPR037103">
    <property type="entry name" value="Tubulin/FtsZ-like_C"/>
</dbReference>
<dbReference type="InterPro" id="IPR018316">
    <property type="entry name" value="Tubulin/FtsZ_2-layer-sand-dom"/>
</dbReference>
<dbReference type="InterPro" id="IPR036525">
    <property type="entry name" value="Tubulin/FtsZ_GTPase_sf"/>
</dbReference>
<dbReference type="InterPro" id="IPR023123">
    <property type="entry name" value="Tubulin_C"/>
</dbReference>
<dbReference type="InterPro" id="IPR017975">
    <property type="entry name" value="Tubulin_CS"/>
</dbReference>
<dbReference type="InterPro" id="IPR003008">
    <property type="entry name" value="Tubulin_FtsZ_GTPase"/>
</dbReference>
<dbReference type="PANTHER" id="PTHR11588">
    <property type="entry name" value="TUBULIN"/>
    <property type="match status" value="1"/>
</dbReference>
<dbReference type="Pfam" id="PF00091">
    <property type="entry name" value="Tubulin"/>
    <property type="match status" value="1"/>
</dbReference>
<dbReference type="Pfam" id="PF03953">
    <property type="entry name" value="Tubulin_C"/>
    <property type="match status" value="1"/>
</dbReference>
<dbReference type="PRINTS" id="PR01163">
    <property type="entry name" value="BETATUBULIN"/>
</dbReference>
<dbReference type="PRINTS" id="PR01161">
    <property type="entry name" value="TUBULIN"/>
</dbReference>
<dbReference type="SMART" id="SM00864">
    <property type="entry name" value="Tubulin"/>
    <property type="match status" value="1"/>
</dbReference>
<dbReference type="SMART" id="SM00865">
    <property type="entry name" value="Tubulin_C"/>
    <property type="match status" value="1"/>
</dbReference>
<dbReference type="SUPFAM" id="SSF55307">
    <property type="entry name" value="Tubulin C-terminal domain-like"/>
    <property type="match status" value="1"/>
</dbReference>
<dbReference type="SUPFAM" id="SSF52490">
    <property type="entry name" value="Tubulin nucleotide-binding domain-like"/>
    <property type="match status" value="1"/>
</dbReference>
<dbReference type="PROSITE" id="PS00227">
    <property type="entry name" value="TUBULIN"/>
    <property type="match status" value="1"/>
</dbReference>
<dbReference type="PROSITE" id="PS00228">
    <property type="entry name" value="TUBULIN_B_AUTOREG"/>
    <property type="match status" value="1"/>
</dbReference>